<reference key="1">
    <citation type="journal article" date="2012" name="BMC Genomics">
        <title>Comparative genomics and transcriptomics of lineages I, II, and III strains of Listeria monocytogenes.</title>
        <authorList>
            <person name="Hain T."/>
            <person name="Ghai R."/>
            <person name="Billion A."/>
            <person name="Kuenne C.T."/>
            <person name="Steinweg C."/>
            <person name="Izar B."/>
            <person name="Mohamed W."/>
            <person name="Mraheil M."/>
            <person name="Domann E."/>
            <person name="Schaffrath S."/>
            <person name="Karst U."/>
            <person name="Goesmann A."/>
            <person name="Oehm S."/>
            <person name="Puhler A."/>
            <person name="Merkl R."/>
            <person name="Vorwerk S."/>
            <person name="Glaser P."/>
            <person name="Garrido P."/>
            <person name="Rusniok C."/>
            <person name="Buchrieser C."/>
            <person name="Goebel W."/>
            <person name="Chakraborty T."/>
        </authorList>
    </citation>
    <scope>NUCLEOTIDE SEQUENCE [LARGE SCALE GENOMIC DNA]</scope>
    <source>
        <strain>CLIP80459</strain>
    </source>
</reference>
<organism>
    <name type="scientific">Listeria monocytogenes serotype 4b (strain CLIP80459)</name>
    <dbReference type="NCBI Taxonomy" id="568819"/>
    <lineage>
        <taxon>Bacteria</taxon>
        <taxon>Bacillati</taxon>
        <taxon>Bacillota</taxon>
        <taxon>Bacilli</taxon>
        <taxon>Bacillales</taxon>
        <taxon>Listeriaceae</taxon>
        <taxon>Listeria</taxon>
    </lineage>
</organism>
<gene>
    <name evidence="1" type="primary">tyrS</name>
    <name type="ordered locus">Lm4b_01609</name>
</gene>
<dbReference type="EC" id="6.1.1.1" evidence="1"/>
<dbReference type="EMBL" id="FM242711">
    <property type="protein sequence ID" value="CAS05370.1"/>
    <property type="molecule type" value="Genomic_DNA"/>
</dbReference>
<dbReference type="RefSeq" id="WP_003731573.1">
    <property type="nucleotide sequence ID" value="NC_012488.1"/>
</dbReference>
<dbReference type="SMR" id="C1KVP5"/>
<dbReference type="KEGG" id="lmc:Lm4b_01609"/>
<dbReference type="HOGENOM" id="CLU_024003_0_3_9"/>
<dbReference type="GO" id="GO:0005829">
    <property type="term" value="C:cytosol"/>
    <property type="evidence" value="ECO:0007669"/>
    <property type="project" value="TreeGrafter"/>
</dbReference>
<dbReference type="GO" id="GO:0005524">
    <property type="term" value="F:ATP binding"/>
    <property type="evidence" value="ECO:0007669"/>
    <property type="project" value="UniProtKB-UniRule"/>
</dbReference>
<dbReference type="GO" id="GO:0003723">
    <property type="term" value="F:RNA binding"/>
    <property type="evidence" value="ECO:0007669"/>
    <property type="project" value="UniProtKB-KW"/>
</dbReference>
<dbReference type="GO" id="GO:0004831">
    <property type="term" value="F:tyrosine-tRNA ligase activity"/>
    <property type="evidence" value="ECO:0007669"/>
    <property type="project" value="UniProtKB-UniRule"/>
</dbReference>
<dbReference type="GO" id="GO:0006437">
    <property type="term" value="P:tyrosyl-tRNA aminoacylation"/>
    <property type="evidence" value="ECO:0007669"/>
    <property type="project" value="UniProtKB-UniRule"/>
</dbReference>
<dbReference type="CDD" id="cd00165">
    <property type="entry name" value="S4"/>
    <property type="match status" value="1"/>
</dbReference>
<dbReference type="CDD" id="cd00805">
    <property type="entry name" value="TyrRS_core"/>
    <property type="match status" value="1"/>
</dbReference>
<dbReference type="FunFam" id="1.10.240.10:FF:000001">
    <property type="entry name" value="Tyrosine--tRNA ligase"/>
    <property type="match status" value="1"/>
</dbReference>
<dbReference type="FunFam" id="3.10.290.10:FF:000012">
    <property type="entry name" value="Tyrosine--tRNA ligase"/>
    <property type="match status" value="1"/>
</dbReference>
<dbReference type="FunFam" id="3.40.50.620:FF:000008">
    <property type="entry name" value="Tyrosine--tRNA ligase"/>
    <property type="match status" value="1"/>
</dbReference>
<dbReference type="Gene3D" id="3.40.50.620">
    <property type="entry name" value="HUPs"/>
    <property type="match status" value="1"/>
</dbReference>
<dbReference type="Gene3D" id="3.10.290.10">
    <property type="entry name" value="RNA-binding S4 domain"/>
    <property type="match status" value="1"/>
</dbReference>
<dbReference type="Gene3D" id="1.10.240.10">
    <property type="entry name" value="Tyrosyl-Transfer RNA Synthetase"/>
    <property type="match status" value="1"/>
</dbReference>
<dbReference type="HAMAP" id="MF_02006">
    <property type="entry name" value="Tyr_tRNA_synth_type1"/>
    <property type="match status" value="1"/>
</dbReference>
<dbReference type="InterPro" id="IPR001412">
    <property type="entry name" value="aa-tRNA-synth_I_CS"/>
</dbReference>
<dbReference type="InterPro" id="IPR002305">
    <property type="entry name" value="aa-tRNA-synth_Ic"/>
</dbReference>
<dbReference type="InterPro" id="IPR014729">
    <property type="entry name" value="Rossmann-like_a/b/a_fold"/>
</dbReference>
<dbReference type="InterPro" id="IPR002942">
    <property type="entry name" value="S4_RNA-bd"/>
</dbReference>
<dbReference type="InterPro" id="IPR036986">
    <property type="entry name" value="S4_RNA-bd_sf"/>
</dbReference>
<dbReference type="InterPro" id="IPR054608">
    <property type="entry name" value="SYY-like_C"/>
</dbReference>
<dbReference type="InterPro" id="IPR002307">
    <property type="entry name" value="Tyr-tRNA-ligase"/>
</dbReference>
<dbReference type="InterPro" id="IPR024088">
    <property type="entry name" value="Tyr-tRNA-ligase_bac-type"/>
</dbReference>
<dbReference type="InterPro" id="IPR024107">
    <property type="entry name" value="Tyr-tRNA-ligase_bac_1"/>
</dbReference>
<dbReference type="NCBIfam" id="TIGR00234">
    <property type="entry name" value="tyrS"/>
    <property type="match status" value="1"/>
</dbReference>
<dbReference type="PANTHER" id="PTHR11766:SF0">
    <property type="entry name" value="TYROSINE--TRNA LIGASE, MITOCHONDRIAL"/>
    <property type="match status" value="1"/>
</dbReference>
<dbReference type="PANTHER" id="PTHR11766">
    <property type="entry name" value="TYROSYL-TRNA SYNTHETASE"/>
    <property type="match status" value="1"/>
</dbReference>
<dbReference type="Pfam" id="PF22421">
    <property type="entry name" value="SYY_C-terminal"/>
    <property type="match status" value="1"/>
</dbReference>
<dbReference type="Pfam" id="PF00579">
    <property type="entry name" value="tRNA-synt_1b"/>
    <property type="match status" value="1"/>
</dbReference>
<dbReference type="PRINTS" id="PR01040">
    <property type="entry name" value="TRNASYNTHTYR"/>
</dbReference>
<dbReference type="SMART" id="SM00363">
    <property type="entry name" value="S4"/>
    <property type="match status" value="1"/>
</dbReference>
<dbReference type="SUPFAM" id="SSF55174">
    <property type="entry name" value="Alpha-L RNA-binding motif"/>
    <property type="match status" value="1"/>
</dbReference>
<dbReference type="SUPFAM" id="SSF52374">
    <property type="entry name" value="Nucleotidylyl transferase"/>
    <property type="match status" value="1"/>
</dbReference>
<dbReference type="PROSITE" id="PS00178">
    <property type="entry name" value="AA_TRNA_LIGASE_I"/>
    <property type="match status" value="1"/>
</dbReference>
<dbReference type="PROSITE" id="PS50889">
    <property type="entry name" value="S4"/>
    <property type="match status" value="1"/>
</dbReference>
<accession>C1KVP5</accession>
<evidence type="ECO:0000255" key="1">
    <source>
        <dbReference type="HAMAP-Rule" id="MF_02006"/>
    </source>
</evidence>
<comment type="function">
    <text evidence="1">Catalyzes the attachment of tyrosine to tRNA(Tyr) in a two-step reaction: tyrosine is first activated by ATP to form Tyr-AMP and then transferred to the acceptor end of tRNA(Tyr).</text>
</comment>
<comment type="catalytic activity">
    <reaction evidence="1">
        <text>tRNA(Tyr) + L-tyrosine + ATP = L-tyrosyl-tRNA(Tyr) + AMP + diphosphate + H(+)</text>
        <dbReference type="Rhea" id="RHEA:10220"/>
        <dbReference type="Rhea" id="RHEA-COMP:9706"/>
        <dbReference type="Rhea" id="RHEA-COMP:9707"/>
        <dbReference type="ChEBI" id="CHEBI:15378"/>
        <dbReference type="ChEBI" id="CHEBI:30616"/>
        <dbReference type="ChEBI" id="CHEBI:33019"/>
        <dbReference type="ChEBI" id="CHEBI:58315"/>
        <dbReference type="ChEBI" id="CHEBI:78442"/>
        <dbReference type="ChEBI" id="CHEBI:78536"/>
        <dbReference type="ChEBI" id="CHEBI:456215"/>
        <dbReference type="EC" id="6.1.1.1"/>
    </reaction>
</comment>
<comment type="subunit">
    <text evidence="1">Homodimer.</text>
</comment>
<comment type="subcellular location">
    <subcellularLocation>
        <location evidence="1">Cytoplasm</location>
    </subcellularLocation>
</comment>
<comment type="similarity">
    <text evidence="1">Belongs to the class-I aminoacyl-tRNA synthetase family. TyrS type 1 subfamily.</text>
</comment>
<name>SYY_LISMC</name>
<protein>
    <recommendedName>
        <fullName evidence="1">Tyrosine--tRNA ligase</fullName>
        <ecNumber evidence="1">6.1.1.1</ecNumber>
    </recommendedName>
    <alternativeName>
        <fullName evidence="1">Tyrosyl-tRNA synthetase</fullName>
        <shortName evidence="1">TyrRS</shortName>
    </alternativeName>
</protein>
<keyword id="KW-0030">Aminoacyl-tRNA synthetase</keyword>
<keyword id="KW-0067">ATP-binding</keyword>
<keyword id="KW-0963">Cytoplasm</keyword>
<keyword id="KW-0436">Ligase</keyword>
<keyword id="KW-0547">Nucleotide-binding</keyword>
<keyword id="KW-0648">Protein biosynthesis</keyword>
<keyword id="KW-0694">RNA-binding</keyword>
<feature type="chain" id="PRO_1000216276" description="Tyrosine--tRNA ligase">
    <location>
        <begin position="1"/>
        <end position="419"/>
    </location>
</feature>
<feature type="domain" description="S4 RNA-binding" evidence="1">
    <location>
        <begin position="352"/>
        <end position="418"/>
    </location>
</feature>
<feature type="short sequence motif" description="'HIGH' region">
    <location>
        <begin position="39"/>
        <end position="48"/>
    </location>
</feature>
<feature type="short sequence motif" description="'KMSKS' region">
    <location>
        <begin position="230"/>
        <end position="234"/>
    </location>
</feature>
<feature type="binding site" evidence="1">
    <location>
        <position position="34"/>
    </location>
    <ligand>
        <name>L-tyrosine</name>
        <dbReference type="ChEBI" id="CHEBI:58315"/>
    </ligand>
</feature>
<feature type="binding site" evidence="1">
    <location>
        <position position="168"/>
    </location>
    <ligand>
        <name>L-tyrosine</name>
        <dbReference type="ChEBI" id="CHEBI:58315"/>
    </ligand>
</feature>
<feature type="binding site" evidence="1">
    <location>
        <position position="172"/>
    </location>
    <ligand>
        <name>L-tyrosine</name>
        <dbReference type="ChEBI" id="CHEBI:58315"/>
    </ligand>
</feature>
<feature type="binding site" evidence="1">
    <location>
        <position position="233"/>
    </location>
    <ligand>
        <name>ATP</name>
        <dbReference type="ChEBI" id="CHEBI:30616"/>
    </ligand>
</feature>
<sequence length="419" mass="47608">MNIIDELEWRGAIYQQTDEEGLRKWVEEKQISLYCGIDPSGDSMHIGHLIPFMILRRFQNAGHRPIILVGGATGTIGDPSGKKEERKLQSMEQISKNVESLRVQLGKIFDFEGNSAASMVNNYDWTKDVSILDFLRDYGKEFNVNTMLSKDIVASRLEVGISFTEFAYQILQAMDFNHLYEFNDCRLQIGGSDQWGNITAGLDLIRKKQGENAKAFGLTIPLLTKADGTKFGKSEGGAIWLNPEKTTPYEFYQFWINTDDRDVVKYLKYFTFLTEAEIDELAKQVETEPHLRAAQKTLAAEMTKFVHSEEALEQALKISKALFSGDVKALTADEIEQGFKDVPTFVAEDTEANLVDWLVTLGIEPSKRQAREDVGNGAIYINGERQQDLEKIMDASDRIENKFTIVRRGKKKYFLVSYK</sequence>
<proteinExistence type="inferred from homology"/>